<evidence type="ECO:0000255" key="1">
    <source>
        <dbReference type="HAMAP-Rule" id="MF_03168"/>
    </source>
</evidence>
<evidence type="ECO:0000256" key="2">
    <source>
        <dbReference type="SAM" id="MobiDB-lite"/>
    </source>
</evidence>
<evidence type="ECO:0000269" key="3">
    <source>
    </source>
</evidence>
<evidence type="ECO:0000305" key="4"/>
<comment type="function">
    <text evidence="1 3">Catalyzes the reversible transfer of the terminal phosphate group between ATP and AMP. Plays an important role in cellular energy homeostasis and in adenine nucleotide metabolism. Adenylate kinase activity is critical for regulation of the phosphate utilization and the AMP de novo biosynthesis pathways. Plays a key role in hematopoiesis.</text>
</comment>
<comment type="catalytic activity">
    <reaction evidence="1">
        <text>AMP + ATP = 2 ADP</text>
        <dbReference type="Rhea" id="RHEA:12973"/>
        <dbReference type="ChEBI" id="CHEBI:30616"/>
        <dbReference type="ChEBI" id="CHEBI:456215"/>
        <dbReference type="ChEBI" id="CHEBI:456216"/>
        <dbReference type="EC" id="2.7.4.3"/>
    </reaction>
</comment>
<comment type="subunit">
    <text evidence="1">Monomer.</text>
</comment>
<comment type="subcellular location">
    <subcellularLocation>
        <location evidence="1">Mitochondrion intermembrane space</location>
    </subcellularLocation>
</comment>
<comment type="domain">
    <text evidence="1">Consists of three domains, a large central CORE domain and two small peripheral domains, NMPbind and LID, which undergo movements during catalysis. The LID domain closes over the site of phosphoryl transfer upon ATP binding. Assembling and dissambling the active center during each catalytic cycle provides an effective means to prevent ATP hydrolysis.</text>
</comment>
<comment type="disruption phenotype">
    <text evidence="3">Leads to aberrant leukocyte development.</text>
</comment>
<comment type="similarity">
    <text evidence="1">Belongs to the adenylate kinase family. AK2 subfamily.</text>
</comment>
<protein>
    <recommendedName>
        <fullName evidence="1">Adenylate kinase 2, mitochondrial</fullName>
        <shortName evidence="1">AK 2</shortName>
        <ecNumber evidence="1">2.7.4.3</ecNumber>
    </recommendedName>
    <alternativeName>
        <fullName evidence="1">ATP-AMP transphosphorylase 2</fullName>
    </alternativeName>
    <alternativeName>
        <fullName evidence="1">ATP:AMP phosphotransferase</fullName>
    </alternativeName>
    <alternativeName>
        <fullName evidence="1">Adenylate monophosphate kinase</fullName>
    </alternativeName>
</protein>
<accession>Q1L8L9</accession>
<accession>Q7T3D7</accession>
<gene>
    <name type="primary">ak2</name>
    <name type="ORF">si:ch211-197n10.1</name>
</gene>
<proteinExistence type="evidence at transcript level"/>
<dbReference type="EC" id="2.7.4.3" evidence="1"/>
<dbReference type="EMBL" id="BX957241">
    <property type="protein sequence ID" value="CAK04357.1"/>
    <property type="molecule type" value="Genomic_DNA"/>
</dbReference>
<dbReference type="EMBL" id="CR753876">
    <property type="protein sequence ID" value="CAK04357.1"/>
    <property type="status" value="JOINED"/>
    <property type="molecule type" value="Genomic_DNA"/>
</dbReference>
<dbReference type="EMBL" id="CR753876">
    <property type="protein sequence ID" value="CAK11314.1"/>
    <property type="molecule type" value="Genomic_DNA"/>
</dbReference>
<dbReference type="EMBL" id="BX957241">
    <property type="protein sequence ID" value="CAK11314.1"/>
    <property type="status" value="JOINED"/>
    <property type="molecule type" value="Genomic_DNA"/>
</dbReference>
<dbReference type="EMBL" id="BC053160">
    <property type="protein sequence ID" value="AAH53160.1"/>
    <property type="molecule type" value="mRNA"/>
</dbReference>
<dbReference type="RefSeq" id="NP_997761.1">
    <property type="nucleotide sequence ID" value="NM_212596.1"/>
</dbReference>
<dbReference type="SMR" id="Q1L8L9"/>
<dbReference type="FunCoup" id="Q1L8L9">
    <property type="interactions" value="1977"/>
</dbReference>
<dbReference type="STRING" id="7955.ENSDARP00000010686"/>
<dbReference type="PaxDb" id="7955-ENSDARP00000010686"/>
<dbReference type="Ensembl" id="ENSDART00000003167">
    <property type="protein sequence ID" value="ENSDARP00000010686"/>
    <property type="gene ID" value="ENSDARG00000005926"/>
</dbReference>
<dbReference type="GeneID" id="321793"/>
<dbReference type="KEGG" id="dre:321793"/>
<dbReference type="AGR" id="ZFIN:ZDB-GENE-030131-512"/>
<dbReference type="CTD" id="204"/>
<dbReference type="ZFIN" id="ZDB-GENE-030131-512">
    <property type="gene designation" value="ak2"/>
</dbReference>
<dbReference type="eggNOG" id="KOG3078">
    <property type="taxonomic scope" value="Eukaryota"/>
</dbReference>
<dbReference type="InParanoid" id="Q1L8L9"/>
<dbReference type="OMA" id="VYHEQTA"/>
<dbReference type="OrthoDB" id="439792at2759"/>
<dbReference type="PhylomeDB" id="Q1L8L9"/>
<dbReference type="TreeFam" id="TF300896"/>
<dbReference type="BRENDA" id="2.7.4.3">
    <property type="organism ID" value="928"/>
</dbReference>
<dbReference type="Reactome" id="R-DRE-499943">
    <property type="pathway name" value="Interconversion of nucleotide di- and triphosphates"/>
</dbReference>
<dbReference type="PRO" id="PR:Q1L8L9"/>
<dbReference type="Proteomes" id="UP000000437">
    <property type="component" value="Chromosome 19"/>
</dbReference>
<dbReference type="Bgee" id="ENSDARG00000005926">
    <property type="expression patterns" value="Expressed in granulocyte and 31 other cell types or tissues"/>
</dbReference>
<dbReference type="ExpressionAtlas" id="Q1L8L9">
    <property type="expression patterns" value="baseline and differential"/>
</dbReference>
<dbReference type="GO" id="GO:0005737">
    <property type="term" value="C:cytoplasm"/>
    <property type="evidence" value="ECO:0000318"/>
    <property type="project" value="GO_Central"/>
</dbReference>
<dbReference type="GO" id="GO:0005758">
    <property type="term" value="C:mitochondrial intermembrane space"/>
    <property type="evidence" value="ECO:0007669"/>
    <property type="project" value="UniProtKB-SubCell"/>
</dbReference>
<dbReference type="GO" id="GO:0005739">
    <property type="term" value="C:mitochondrion"/>
    <property type="evidence" value="ECO:0000318"/>
    <property type="project" value="GO_Central"/>
</dbReference>
<dbReference type="GO" id="GO:0004017">
    <property type="term" value="F:adenylate kinase activity"/>
    <property type="evidence" value="ECO:0000318"/>
    <property type="project" value="GO_Central"/>
</dbReference>
<dbReference type="GO" id="GO:0005524">
    <property type="term" value="F:ATP binding"/>
    <property type="evidence" value="ECO:0007669"/>
    <property type="project" value="UniProtKB-KW"/>
</dbReference>
<dbReference type="GO" id="GO:0006172">
    <property type="term" value="P:ADP biosynthetic process"/>
    <property type="evidence" value="ECO:0000318"/>
    <property type="project" value="GO_Central"/>
</dbReference>
<dbReference type="GO" id="GO:0046033">
    <property type="term" value="P:AMP metabolic process"/>
    <property type="evidence" value="ECO:0007669"/>
    <property type="project" value="UniProtKB-UniRule"/>
</dbReference>
<dbReference type="GO" id="GO:0046034">
    <property type="term" value="P:ATP metabolic process"/>
    <property type="evidence" value="ECO:0007669"/>
    <property type="project" value="UniProtKB-UniRule"/>
</dbReference>
<dbReference type="GO" id="GO:0002244">
    <property type="term" value="P:hematopoietic progenitor cell differentiation"/>
    <property type="evidence" value="ECO:0000315"/>
    <property type="project" value="ZFIN"/>
</dbReference>
<dbReference type="GO" id="GO:0060218">
    <property type="term" value="P:hematopoietic stem cell differentiation"/>
    <property type="evidence" value="ECO:0000315"/>
    <property type="project" value="ZFIN"/>
</dbReference>
<dbReference type="GO" id="GO:0002521">
    <property type="term" value="P:leukocyte differentiation"/>
    <property type="evidence" value="ECO:0000315"/>
    <property type="project" value="ZFIN"/>
</dbReference>
<dbReference type="CDD" id="cd01428">
    <property type="entry name" value="ADK"/>
    <property type="match status" value="1"/>
</dbReference>
<dbReference type="FunFam" id="3.40.50.300:FF:000106">
    <property type="entry name" value="Adenylate kinase mitochondrial"/>
    <property type="match status" value="1"/>
</dbReference>
<dbReference type="Gene3D" id="3.40.50.300">
    <property type="entry name" value="P-loop containing nucleotide triphosphate hydrolases"/>
    <property type="match status" value="1"/>
</dbReference>
<dbReference type="HAMAP" id="MF_00235">
    <property type="entry name" value="Adenylate_kinase_Adk"/>
    <property type="match status" value="1"/>
</dbReference>
<dbReference type="HAMAP" id="MF_03168">
    <property type="entry name" value="Adenylate_kinase_AK2"/>
    <property type="match status" value="1"/>
</dbReference>
<dbReference type="InterPro" id="IPR006259">
    <property type="entry name" value="Adenyl_kin_sub"/>
</dbReference>
<dbReference type="InterPro" id="IPR000850">
    <property type="entry name" value="Adenylat/UMP-CMP_kin"/>
</dbReference>
<dbReference type="InterPro" id="IPR033690">
    <property type="entry name" value="Adenylat_kinase_CS"/>
</dbReference>
<dbReference type="InterPro" id="IPR007862">
    <property type="entry name" value="Adenylate_kinase_lid-dom"/>
</dbReference>
<dbReference type="InterPro" id="IPR028587">
    <property type="entry name" value="AK2"/>
</dbReference>
<dbReference type="InterPro" id="IPR027417">
    <property type="entry name" value="P-loop_NTPase"/>
</dbReference>
<dbReference type="NCBIfam" id="TIGR01351">
    <property type="entry name" value="adk"/>
    <property type="match status" value="1"/>
</dbReference>
<dbReference type="NCBIfam" id="NF001380">
    <property type="entry name" value="PRK00279.1-2"/>
    <property type="match status" value="1"/>
</dbReference>
<dbReference type="NCBIfam" id="NF001381">
    <property type="entry name" value="PRK00279.1-3"/>
    <property type="match status" value="1"/>
</dbReference>
<dbReference type="NCBIfam" id="NF011100">
    <property type="entry name" value="PRK14527.1"/>
    <property type="match status" value="1"/>
</dbReference>
<dbReference type="PANTHER" id="PTHR23359">
    <property type="entry name" value="NUCLEOTIDE KINASE"/>
    <property type="match status" value="1"/>
</dbReference>
<dbReference type="Pfam" id="PF00406">
    <property type="entry name" value="ADK"/>
    <property type="match status" value="1"/>
</dbReference>
<dbReference type="Pfam" id="PF05191">
    <property type="entry name" value="ADK_lid"/>
    <property type="match status" value="1"/>
</dbReference>
<dbReference type="PRINTS" id="PR00094">
    <property type="entry name" value="ADENYLTKNASE"/>
</dbReference>
<dbReference type="SUPFAM" id="SSF52540">
    <property type="entry name" value="P-loop containing nucleoside triphosphate hydrolases"/>
    <property type="match status" value="1"/>
</dbReference>
<dbReference type="PROSITE" id="PS00113">
    <property type="entry name" value="ADENYLATE_KINASE"/>
    <property type="match status" value="1"/>
</dbReference>
<keyword id="KW-0067">ATP-binding</keyword>
<keyword id="KW-1015">Disulfide bond</keyword>
<keyword id="KW-0418">Kinase</keyword>
<keyword id="KW-0496">Mitochondrion</keyword>
<keyword id="KW-0547">Nucleotide-binding</keyword>
<keyword id="KW-1185">Reference proteome</keyword>
<keyword id="KW-0808">Transferase</keyword>
<sequence>MAPSTQEDDTVSGIRKGIRAILLGPPGAGKGTQAPKLAEKYCVCHLATGDMLRAMVASGSELGQRLKETMDAGKLVSDEMVVELIDNNLDTPACKNGFLLDGFPRTVKQAEMLDDLMEKRSEKLDSVIEFSVDDSLLVRRICGRLIHQPSGRSYHEEFHPPKEHMKDDVTGEPLIRRSDDNETTLRSRLESYHRQTSPLVQYYSARGLHTAIDASQSTDLVFASILAAFSAATCKDLVYFV</sequence>
<organism>
    <name type="scientific">Danio rerio</name>
    <name type="common">Zebrafish</name>
    <name type="synonym">Brachydanio rerio</name>
    <dbReference type="NCBI Taxonomy" id="7955"/>
    <lineage>
        <taxon>Eukaryota</taxon>
        <taxon>Metazoa</taxon>
        <taxon>Chordata</taxon>
        <taxon>Craniata</taxon>
        <taxon>Vertebrata</taxon>
        <taxon>Euteleostomi</taxon>
        <taxon>Actinopterygii</taxon>
        <taxon>Neopterygii</taxon>
        <taxon>Teleostei</taxon>
        <taxon>Ostariophysi</taxon>
        <taxon>Cypriniformes</taxon>
        <taxon>Danionidae</taxon>
        <taxon>Danioninae</taxon>
        <taxon>Danio</taxon>
    </lineage>
</organism>
<name>KAD2_DANRE</name>
<reference key="1">
    <citation type="journal article" date="2013" name="Nature">
        <title>The zebrafish reference genome sequence and its relationship to the human genome.</title>
        <authorList>
            <person name="Howe K."/>
            <person name="Clark M.D."/>
            <person name="Torroja C.F."/>
            <person name="Torrance J."/>
            <person name="Berthelot C."/>
            <person name="Muffato M."/>
            <person name="Collins J.E."/>
            <person name="Humphray S."/>
            <person name="McLaren K."/>
            <person name="Matthews L."/>
            <person name="McLaren S."/>
            <person name="Sealy I."/>
            <person name="Caccamo M."/>
            <person name="Churcher C."/>
            <person name="Scott C."/>
            <person name="Barrett J.C."/>
            <person name="Koch R."/>
            <person name="Rauch G.J."/>
            <person name="White S."/>
            <person name="Chow W."/>
            <person name="Kilian B."/>
            <person name="Quintais L.T."/>
            <person name="Guerra-Assuncao J.A."/>
            <person name="Zhou Y."/>
            <person name="Gu Y."/>
            <person name="Yen J."/>
            <person name="Vogel J.H."/>
            <person name="Eyre T."/>
            <person name="Redmond S."/>
            <person name="Banerjee R."/>
            <person name="Chi J."/>
            <person name="Fu B."/>
            <person name="Langley E."/>
            <person name="Maguire S.F."/>
            <person name="Laird G.K."/>
            <person name="Lloyd D."/>
            <person name="Kenyon E."/>
            <person name="Donaldson S."/>
            <person name="Sehra H."/>
            <person name="Almeida-King J."/>
            <person name="Loveland J."/>
            <person name="Trevanion S."/>
            <person name="Jones M."/>
            <person name="Quail M."/>
            <person name="Willey D."/>
            <person name="Hunt A."/>
            <person name="Burton J."/>
            <person name="Sims S."/>
            <person name="McLay K."/>
            <person name="Plumb B."/>
            <person name="Davis J."/>
            <person name="Clee C."/>
            <person name="Oliver K."/>
            <person name="Clark R."/>
            <person name="Riddle C."/>
            <person name="Elliot D."/>
            <person name="Threadgold G."/>
            <person name="Harden G."/>
            <person name="Ware D."/>
            <person name="Begum S."/>
            <person name="Mortimore B."/>
            <person name="Kerry G."/>
            <person name="Heath P."/>
            <person name="Phillimore B."/>
            <person name="Tracey A."/>
            <person name="Corby N."/>
            <person name="Dunn M."/>
            <person name="Johnson C."/>
            <person name="Wood J."/>
            <person name="Clark S."/>
            <person name="Pelan S."/>
            <person name="Griffiths G."/>
            <person name="Smith M."/>
            <person name="Glithero R."/>
            <person name="Howden P."/>
            <person name="Barker N."/>
            <person name="Lloyd C."/>
            <person name="Stevens C."/>
            <person name="Harley J."/>
            <person name="Holt K."/>
            <person name="Panagiotidis G."/>
            <person name="Lovell J."/>
            <person name="Beasley H."/>
            <person name="Henderson C."/>
            <person name="Gordon D."/>
            <person name="Auger K."/>
            <person name="Wright D."/>
            <person name="Collins J."/>
            <person name="Raisen C."/>
            <person name="Dyer L."/>
            <person name="Leung K."/>
            <person name="Robertson L."/>
            <person name="Ambridge K."/>
            <person name="Leongamornlert D."/>
            <person name="McGuire S."/>
            <person name="Gilderthorp R."/>
            <person name="Griffiths C."/>
            <person name="Manthravadi D."/>
            <person name="Nichol S."/>
            <person name="Barker G."/>
            <person name="Whitehead S."/>
            <person name="Kay M."/>
            <person name="Brown J."/>
            <person name="Murnane C."/>
            <person name="Gray E."/>
            <person name="Humphries M."/>
            <person name="Sycamore N."/>
            <person name="Barker D."/>
            <person name="Saunders D."/>
            <person name="Wallis J."/>
            <person name="Babbage A."/>
            <person name="Hammond S."/>
            <person name="Mashreghi-Mohammadi M."/>
            <person name="Barr L."/>
            <person name="Martin S."/>
            <person name="Wray P."/>
            <person name="Ellington A."/>
            <person name="Matthews N."/>
            <person name="Ellwood M."/>
            <person name="Woodmansey R."/>
            <person name="Clark G."/>
            <person name="Cooper J."/>
            <person name="Tromans A."/>
            <person name="Grafham D."/>
            <person name="Skuce C."/>
            <person name="Pandian R."/>
            <person name="Andrews R."/>
            <person name="Harrison E."/>
            <person name="Kimberley A."/>
            <person name="Garnett J."/>
            <person name="Fosker N."/>
            <person name="Hall R."/>
            <person name="Garner P."/>
            <person name="Kelly D."/>
            <person name="Bird C."/>
            <person name="Palmer S."/>
            <person name="Gehring I."/>
            <person name="Berger A."/>
            <person name="Dooley C.M."/>
            <person name="Ersan-Urun Z."/>
            <person name="Eser C."/>
            <person name="Geiger H."/>
            <person name="Geisler M."/>
            <person name="Karotki L."/>
            <person name="Kirn A."/>
            <person name="Konantz J."/>
            <person name="Konantz M."/>
            <person name="Oberlander M."/>
            <person name="Rudolph-Geiger S."/>
            <person name="Teucke M."/>
            <person name="Lanz C."/>
            <person name="Raddatz G."/>
            <person name="Osoegawa K."/>
            <person name="Zhu B."/>
            <person name="Rapp A."/>
            <person name="Widaa S."/>
            <person name="Langford C."/>
            <person name="Yang F."/>
            <person name="Schuster S.C."/>
            <person name="Carter N.P."/>
            <person name="Harrow J."/>
            <person name="Ning Z."/>
            <person name="Herrero J."/>
            <person name="Searle S.M."/>
            <person name="Enright A."/>
            <person name="Geisler R."/>
            <person name="Plasterk R.H."/>
            <person name="Lee C."/>
            <person name="Westerfield M."/>
            <person name="de Jong P.J."/>
            <person name="Zon L.I."/>
            <person name="Postlethwait J.H."/>
            <person name="Nusslein-Volhard C."/>
            <person name="Hubbard T.J."/>
            <person name="Roest Crollius H."/>
            <person name="Rogers J."/>
            <person name="Stemple D.L."/>
        </authorList>
    </citation>
    <scope>NUCLEOTIDE SEQUENCE [LARGE SCALE GENOMIC DNA]</scope>
    <source>
        <strain>Tuebingen</strain>
    </source>
</reference>
<reference key="2">
    <citation type="submission" date="2003-06" db="EMBL/GenBank/DDBJ databases">
        <authorList>
            <consortium name="NIH - Zebrafish Gene Collection (ZGC) project"/>
        </authorList>
    </citation>
    <scope>NUCLEOTIDE SEQUENCE [LARGE SCALE MRNA]</scope>
    <source>
        <tissue>Kidney</tissue>
    </source>
</reference>
<reference key="3">
    <citation type="journal article" date="2009" name="Nat. Genet.">
        <title>Reticular dysgenesis (aleukocytosis) is caused by mutations in the gene encoding mitochondrial adenylate kinase 2.</title>
        <authorList>
            <person name="Pannicke U."/>
            <person name="Hoenig M."/>
            <person name="Hess I."/>
            <person name="Friesen C."/>
            <person name="Holzmann K."/>
            <person name="Rump E.-M."/>
            <person name="Barth T.F."/>
            <person name="Rojewski M.T."/>
            <person name="Schulz A."/>
            <person name="Boehm T."/>
            <person name="Friedrich W."/>
            <person name="Schwarz K."/>
        </authorList>
    </citation>
    <scope>FUNCTION</scope>
    <scope>DISRUPTION PHENOTYPE</scope>
</reference>
<feature type="chain" id="PRO_0000365695" description="Adenylate kinase 2, mitochondrial">
    <location>
        <begin position="1"/>
        <end position="241"/>
    </location>
</feature>
<feature type="region of interest" description="NMP" evidence="1">
    <location>
        <begin position="47"/>
        <end position="76"/>
    </location>
</feature>
<feature type="region of interest" description="LID" evidence="1">
    <location>
        <begin position="143"/>
        <end position="180"/>
    </location>
</feature>
<feature type="region of interest" description="Disordered" evidence="2">
    <location>
        <begin position="152"/>
        <end position="180"/>
    </location>
</feature>
<feature type="compositionally biased region" description="Basic and acidic residues" evidence="2">
    <location>
        <begin position="153"/>
        <end position="180"/>
    </location>
</feature>
<feature type="binding site" evidence="1">
    <location>
        <begin position="27"/>
        <end position="32"/>
    </location>
    <ligand>
        <name>ATP</name>
        <dbReference type="ChEBI" id="CHEBI:30616"/>
    </ligand>
</feature>
<feature type="binding site" evidence="1">
    <location>
        <position position="48"/>
    </location>
    <ligand>
        <name>AMP</name>
        <dbReference type="ChEBI" id="CHEBI:456215"/>
    </ligand>
</feature>
<feature type="binding site" evidence="1">
    <location>
        <position position="53"/>
    </location>
    <ligand>
        <name>AMP</name>
        <dbReference type="ChEBI" id="CHEBI:456215"/>
    </ligand>
</feature>
<feature type="binding site" evidence="1">
    <location>
        <begin position="74"/>
        <end position="76"/>
    </location>
    <ligand>
        <name>AMP</name>
        <dbReference type="ChEBI" id="CHEBI:456215"/>
    </ligand>
</feature>
<feature type="binding site" evidence="1">
    <location>
        <begin position="102"/>
        <end position="105"/>
    </location>
    <ligand>
        <name>AMP</name>
        <dbReference type="ChEBI" id="CHEBI:456215"/>
    </ligand>
</feature>
<feature type="binding site" evidence="1">
    <location>
        <position position="109"/>
    </location>
    <ligand>
        <name>AMP</name>
        <dbReference type="ChEBI" id="CHEBI:456215"/>
    </ligand>
</feature>
<feature type="binding site" evidence="1">
    <location>
        <position position="144"/>
    </location>
    <ligand>
        <name>ATP</name>
        <dbReference type="ChEBI" id="CHEBI:30616"/>
    </ligand>
</feature>
<feature type="binding site" evidence="1">
    <location>
        <begin position="153"/>
        <end position="154"/>
    </location>
    <ligand>
        <name>ATP</name>
        <dbReference type="ChEBI" id="CHEBI:30616"/>
    </ligand>
</feature>
<feature type="binding site" evidence="1">
    <location>
        <position position="177"/>
    </location>
    <ligand>
        <name>AMP</name>
        <dbReference type="ChEBI" id="CHEBI:456215"/>
    </ligand>
</feature>
<feature type="binding site" evidence="1">
    <location>
        <position position="188"/>
    </location>
    <ligand>
        <name>AMP</name>
        <dbReference type="ChEBI" id="CHEBI:456215"/>
    </ligand>
</feature>
<feature type="binding site" evidence="1">
    <location>
        <position position="216"/>
    </location>
    <ligand>
        <name>ATP</name>
        <dbReference type="ChEBI" id="CHEBI:30616"/>
    </ligand>
</feature>
<feature type="disulfide bond" evidence="1">
    <location>
        <begin position="44"/>
        <end position="94"/>
    </location>
</feature>
<feature type="sequence conflict" description="In Ref. 2; AAH53160." evidence="4" ref="2">
    <original>A</original>
    <variation>S</variation>
    <location>
        <position position="93"/>
    </location>
</feature>